<comment type="function">
    <text evidence="1">Essential for recycling GMP and indirectly, cGMP.</text>
</comment>
<comment type="catalytic activity">
    <reaction evidence="1">
        <text>GMP + ATP = GDP + ADP</text>
        <dbReference type="Rhea" id="RHEA:20780"/>
        <dbReference type="ChEBI" id="CHEBI:30616"/>
        <dbReference type="ChEBI" id="CHEBI:58115"/>
        <dbReference type="ChEBI" id="CHEBI:58189"/>
        <dbReference type="ChEBI" id="CHEBI:456216"/>
        <dbReference type="EC" id="2.7.4.8"/>
    </reaction>
</comment>
<comment type="subcellular location">
    <subcellularLocation>
        <location evidence="1">Cytoplasm</location>
    </subcellularLocation>
</comment>
<comment type="similarity">
    <text evidence="1">Belongs to the guanylate kinase family.</text>
</comment>
<name>KGUA_BURO1</name>
<keyword id="KW-0067">ATP-binding</keyword>
<keyword id="KW-0963">Cytoplasm</keyword>
<keyword id="KW-0418">Kinase</keyword>
<keyword id="KW-0547">Nucleotide-binding</keyword>
<keyword id="KW-0808">Transferase</keyword>
<accession>Q1BY73</accession>
<protein>
    <recommendedName>
        <fullName evidence="1">Guanylate kinase</fullName>
        <ecNumber evidence="1">2.7.4.8</ecNumber>
    </recommendedName>
    <alternativeName>
        <fullName evidence="1">GMP kinase</fullName>
    </alternativeName>
</protein>
<sequence length="227" mass="25386">MTDSTRDGHASHSLHGGVYPGNLFMVVAPSGAGKSTLVNALLSKDSDICLSISYTTRKPRPGEQDGQHYHFTTVEDFRARHAAHEFLESAEVHGNYYGTSRVWIEEQMRNGHDVLLEIDWQGALQVKKQFRNAVGIFILPPSLDALEERLKKRGQDEPNVITRRLLAAGSEIAHASEAEYVVINENFERALAELECIVAATRLRFASQYARHTELFIDLGVHLPHAE</sequence>
<evidence type="ECO:0000255" key="1">
    <source>
        <dbReference type="HAMAP-Rule" id="MF_00328"/>
    </source>
</evidence>
<feature type="chain" id="PRO_0000266295" description="Guanylate kinase">
    <location>
        <begin position="1"/>
        <end position="227"/>
    </location>
</feature>
<feature type="domain" description="Guanylate kinase-like" evidence="1">
    <location>
        <begin position="21"/>
        <end position="199"/>
    </location>
</feature>
<feature type="binding site" evidence="1">
    <location>
        <begin position="28"/>
        <end position="35"/>
    </location>
    <ligand>
        <name>ATP</name>
        <dbReference type="ChEBI" id="CHEBI:30616"/>
    </ligand>
</feature>
<dbReference type="EC" id="2.7.4.8" evidence="1"/>
<dbReference type="EMBL" id="CP000378">
    <property type="protein sequence ID" value="ABF75432.1"/>
    <property type="molecule type" value="Genomic_DNA"/>
</dbReference>
<dbReference type="SMR" id="Q1BY73"/>
<dbReference type="HOGENOM" id="CLU_001715_1_0_4"/>
<dbReference type="GO" id="GO:0005829">
    <property type="term" value="C:cytosol"/>
    <property type="evidence" value="ECO:0007669"/>
    <property type="project" value="TreeGrafter"/>
</dbReference>
<dbReference type="GO" id="GO:0005524">
    <property type="term" value="F:ATP binding"/>
    <property type="evidence" value="ECO:0007669"/>
    <property type="project" value="UniProtKB-UniRule"/>
</dbReference>
<dbReference type="GO" id="GO:0004385">
    <property type="term" value="F:guanylate kinase activity"/>
    <property type="evidence" value="ECO:0007669"/>
    <property type="project" value="UniProtKB-UniRule"/>
</dbReference>
<dbReference type="CDD" id="cd00071">
    <property type="entry name" value="GMPK"/>
    <property type="match status" value="1"/>
</dbReference>
<dbReference type="FunFam" id="3.30.63.10:FF:000002">
    <property type="entry name" value="Guanylate kinase 1"/>
    <property type="match status" value="1"/>
</dbReference>
<dbReference type="Gene3D" id="3.30.63.10">
    <property type="entry name" value="Guanylate Kinase phosphate binding domain"/>
    <property type="match status" value="1"/>
</dbReference>
<dbReference type="Gene3D" id="3.40.50.300">
    <property type="entry name" value="P-loop containing nucleotide triphosphate hydrolases"/>
    <property type="match status" value="1"/>
</dbReference>
<dbReference type="HAMAP" id="MF_00328">
    <property type="entry name" value="Guanylate_kinase"/>
    <property type="match status" value="1"/>
</dbReference>
<dbReference type="InterPro" id="IPR008145">
    <property type="entry name" value="GK/Ca_channel_bsu"/>
</dbReference>
<dbReference type="InterPro" id="IPR008144">
    <property type="entry name" value="Guanylate_kin-like_dom"/>
</dbReference>
<dbReference type="InterPro" id="IPR017665">
    <property type="entry name" value="Guanylate_kinase"/>
</dbReference>
<dbReference type="InterPro" id="IPR020590">
    <property type="entry name" value="Guanylate_kinase_CS"/>
</dbReference>
<dbReference type="InterPro" id="IPR027417">
    <property type="entry name" value="P-loop_NTPase"/>
</dbReference>
<dbReference type="NCBIfam" id="TIGR03263">
    <property type="entry name" value="guanyl_kin"/>
    <property type="match status" value="1"/>
</dbReference>
<dbReference type="PANTHER" id="PTHR23117:SF13">
    <property type="entry name" value="GUANYLATE KINASE"/>
    <property type="match status" value="1"/>
</dbReference>
<dbReference type="PANTHER" id="PTHR23117">
    <property type="entry name" value="GUANYLATE KINASE-RELATED"/>
    <property type="match status" value="1"/>
</dbReference>
<dbReference type="Pfam" id="PF00625">
    <property type="entry name" value="Guanylate_kin"/>
    <property type="match status" value="1"/>
</dbReference>
<dbReference type="SMART" id="SM00072">
    <property type="entry name" value="GuKc"/>
    <property type="match status" value="1"/>
</dbReference>
<dbReference type="SUPFAM" id="SSF52540">
    <property type="entry name" value="P-loop containing nucleoside triphosphate hydrolases"/>
    <property type="match status" value="1"/>
</dbReference>
<dbReference type="PROSITE" id="PS00856">
    <property type="entry name" value="GUANYLATE_KINASE_1"/>
    <property type="match status" value="1"/>
</dbReference>
<dbReference type="PROSITE" id="PS50052">
    <property type="entry name" value="GUANYLATE_KINASE_2"/>
    <property type="match status" value="1"/>
</dbReference>
<gene>
    <name evidence="1" type="primary">gmk</name>
    <name type="ordered locus">Bcen_0520</name>
</gene>
<proteinExistence type="inferred from homology"/>
<organism>
    <name type="scientific">Burkholderia orbicola (strain AU 1054)</name>
    <dbReference type="NCBI Taxonomy" id="331271"/>
    <lineage>
        <taxon>Bacteria</taxon>
        <taxon>Pseudomonadati</taxon>
        <taxon>Pseudomonadota</taxon>
        <taxon>Betaproteobacteria</taxon>
        <taxon>Burkholderiales</taxon>
        <taxon>Burkholderiaceae</taxon>
        <taxon>Burkholderia</taxon>
        <taxon>Burkholderia cepacia complex</taxon>
        <taxon>Burkholderia orbicola</taxon>
    </lineage>
</organism>
<reference key="1">
    <citation type="submission" date="2006-05" db="EMBL/GenBank/DDBJ databases">
        <title>Complete sequence of chromosome 1 of Burkholderia cenocepacia AU 1054.</title>
        <authorList>
            <consortium name="US DOE Joint Genome Institute"/>
            <person name="Copeland A."/>
            <person name="Lucas S."/>
            <person name="Lapidus A."/>
            <person name="Barry K."/>
            <person name="Detter J.C."/>
            <person name="Glavina del Rio T."/>
            <person name="Hammon N."/>
            <person name="Israni S."/>
            <person name="Dalin E."/>
            <person name="Tice H."/>
            <person name="Pitluck S."/>
            <person name="Chain P."/>
            <person name="Malfatti S."/>
            <person name="Shin M."/>
            <person name="Vergez L."/>
            <person name="Schmutz J."/>
            <person name="Larimer F."/>
            <person name="Land M."/>
            <person name="Hauser L."/>
            <person name="Kyrpides N."/>
            <person name="Lykidis A."/>
            <person name="LiPuma J.J."/>
            <person name="Konstantinidis K."/>
            <person name="Tiedje J.M."/>
            <person name="Richardson P."/>
        </authorList>
    </citation>
    <scope>NUCLEOTIDE SEQUENCE [LARGE SCALE GENOMIC DNA]</scope>
    <source>
        <strain>AU 1054</strain>
    </source>
</reference>